<protein>
    <recommendedName>
        <fullName evidence="2">Protein kintoun</fullName>
    </recommendedName>
    <alternativeName>
        <fullName evidence="2">Dynein assembly factor 2, axonemal homolog</fullName>
    </alternativeName>
    <alternativeName>
        <fullName evidence="2">PP1-interacting protein 20</fullName>
    </alternativeName>
</protein>
<feature type="chain" id="PRO_0000365813" description="Protein kintoun">
    <location>
        <begin position="1"/>
        <end position="828"/>
    </location>
</feature>
<feature type="region of interest" description="Disordered" evidence="3">
    <location>
        <begin position="1"/>
        <end position="31"/>
    </location>
</feature>
<feature type="region of interest" description="Disordered" evidence="3">
    <location>
        <begin position="223"/>
        <end position="250"/>
    </location>
</feature>
<feature type="region of interest" description="Disordered" evidence="3">
    <location>
        <begin position="383"/>
        <end position="424"/>
    </location>
</feature>
<feature type="region of interest" description="Disordered" evidence="3">
    <location>
        <begin position="556"/>
        <end position="668"/>
    </location>
</feature>
<feature type="region of interest" description="Disordered" evidence="3">
    <location>
        <begin position="741"/>
        <end position="828"/>
    </location>
</feature>
<feature type="compositionally biased region" description="Basic residues" evidence="3">
    <location>
        <begin position="9"/>
        <end position="22"/>
    </location>
</feature>
<feature type="compositionally biased region" description="Acidic residues" evidence="3">
    <location>
        <begin position="395"/>
        <end position="414"/>
    </location>
</feature>
<feature type="compositionally biased region" description="Basic and acidic residues" evidence="3">
    <location>
        <begin position="556"/>
        <end position="573"/>
    </location>
</feature>
<feature type="compositionally biased region" description="Acidic residues" evidence="3">
    <location>
        <begin position="591"/>
        <end position="601"/>
    </location>
</feature>
<feature type="compositionally biased region" description="Basic residues" evidence="3">
    <location>
        <begin position="606"/>
        <end position="620"/>
    </location>
</feature>
<feature type="compositionally biased region" description="Polar residues" evidence="3">
    <location>
        <begin position="625"/>
        <end position="641"/>
    </location>
</feature>
<feature type="compositionally biased region" description="Basic residues" evidence="3">
    <location>
        <begin position="741"/>
        <end position="755"/>
    </location>
</feature>
<feature type="compositionally biased region" description="Basic and acidic residues" evidence="3">
    <location>
        <begin position="788"/>
        <end position="808"/>
    </location>
</feature>
<feature type="compositionally biased region" description="Acidic residues" evidence="3">
    <location>
        <begin position="815"/>
        <end position="828"/>
    </location>
</feature>
<feature type="modified residue" description="Phosphoserine" evidence="1">
    <location>
        <position position="384"/>
    </location>
</feature>
<feature type="modified residue" description="Phosphoserine" evidence="1">
    <location>
        <position position="759"/>
    </location>
</feature>
<accession>P0CU29</accession>
<accession>B4MPK3</accession>
<reference key="1">
    <citation type="journal article" date="2007" name="Nature">
        <title>Evolution of genes and genomes on the Drosophila phylogeny.</title>
        <authorList>
            <consortium name="Drosophila 12 genomes consortium"/>
        </authorList>
    </citation>
    <scope>NUCLEOTIDE SEQUENCE [LARGE SCALE GENOMIC DNA]</scope>
    <source>
        <strain>Tucson 14030-0811.24</strain>
    </source>
</reference>
<proteinExistence type="inferred from homology"/>
<organism>
    <name type="scientific">Drosophila willistoni</name>
    <name type="common">Fruit fly</name>
    <dbReference type="NCBI Taxonomy" id="7260"/>
    <lineage>
        <taxon>Eukaryota</taxon>
        <taxon>Metazoa</taxon>
        <taxon>Ecdysozoa</taxon>
        <taxon>Arthropoda</taxon>
        <taxon>Hexapoda</taxon>
        <taxon>Insecta</taxon>
        <taxon>Pterygota</taxon>
        <taxon>Neoptera</taxon>
        <taxon>Endopterygota</taxon>
        <taxon>Diptera</taxon>
        <taxon>Brachycera</taxon>
        <taxon>Muscomorpha</taxon>
        <taxon>Ephydroidea</taxon>
        <taxon>Drosophilidae</taxon>
        <taxon>Drosophila</taxon>
        <taxon>Sophophora</taxon>
    </lineage>
</organism>
<gene>
    <name evidence="2" type="primary">Nop17l</name>
    <name evidence="2" type="synonym">Ppi20</name>
    <name type="ORF">GK27737</name>
</gene>
<comment type="function">
    <text evidence="2">Required for cytoplasmic pre-assembly of axonemal dyneins, thereby playing a central role in motility in cilia and flagella. Involved in pre-assembly of dynein arm complexes in the cytoplasm before intraflagellar transport loads them for the ciliary compartment.</text>
</comment>
<comment type="subunit">
    <text evidence="2">Interacts with Pp1alpha-96A, Pp1-87B, Pp1-13C and flw.</text>
</comment>
<comment type="subcellular location">
    <subcellularLocation>
        <location evidence="2">Cytoplasm</location>
    </subcellularLocation>
</comment>
<comment type="similarity">
    <text evidence="2">Belongs to the PIH1 family. Kintoun subfamily.</text>
</comment>
<comment type="sequence caution" evidence="4">
    <conflict type="erroneous gene model prediction">
        <sequence resource="EMBL-CDS" id="EDW74042"/>
    </conflict>
    <text>The predicted gene GK21583 has been split into 2 genes: GK21583 and GK27737.</text>
</comment>
<sequence>MSGSTASARNKHSKGNLKHNNNKNKNNDEPIDITKDEFERIREALGKEEFRKLFFEYVDEIQDPANRKIYEDEITQLEKERGVEVTFIHPQPGFVVKTSIDGEQKCFINIAGSPEIARPESKLDINPDTGDRGLSWSIPMAQTASRDDCDAKNQQCKVFDVVFHPDALHLGQKNSQFRKCLIDTALDAVEREYEVNLDRTNLKYPKLDYKGIARPTVIRKLSKNPTDEELEPHPLEHSFPTKPTAGEGEPKVLPMKVQKEQPKAPKFTEPKYSIKYSHDVDLSEYTNELDAKLQVTKPRALVVEIELPLLRSTAECELDVTSKSIYLLSERAGAKYRLKLDLPYTVDDKSGRARFDTDKRRLNIHLPVIRSNEPNLRLLSREDSGVELHSNSESPVEEEEDGEDEIEAEEEEEEVKTKVKPTSNPPSFLKSSLHYQLPGKFDCNLLDNCMAFTLHVANVQPDSIEYVQEKRSLHLQFASMGNGYYPTHYAFYVALPAKESQLIIENVEAEAWDNNVILKLDLNKSSESIESYLAGLDDQDLQDYAIHGQFKALKEAPVQEDKPGDIQFKRNDQEPSLEITVSGLNAVEQQEREEGEIEEAEEQQHKKSASKKQRGKRNKKERSLSESACVSLPTSVDSQPMATLKLPQRKQRSFSECHEQQHHHHRGILKRFSRYDGNDSCSSIDDCSSSYPCSVEASRSFGGIPEEDSSLSESCKKTVRFNDHIMKQVFRLDSSILGQRKKNQKRRDCKLRAQQRRLSEGDSADYEESTANKTQYCKYNKKHHHHHDSGLDLTRHNKKRELAEEADNKNSLMFEMDDDDDDEDEDLI</sequence>
<dbReference type="EMBL" id="CH963849">
    <property type="protein sequence ID" value="EDW74042.1"/>
    <property type="status" value="ALT_SEQ"/>
    <property type="molecule type" value="Genomic_DNA"/>
</dbReference>
<dbReference type="SMR" id="P0CU29"/>
<dbReference type="STRING" id="7260.P0CU29"/>
<dbReference type="EnsemblMetazoa" id="FBtr0416438">
    <property type="protein sequence ID" value="FBpp0374625"/>
    <property type="gene ID" value="FBgn0279603"/>
</dbReference>
<dbReference type="EnsemblMetazoa" id="XM_015178921.3">
    <property type="protein sequence ID" value="XP_015034407.1"/>
    <property type="gene ID" value="LOC26529739"/>
</dbReference>
<dbReference type="GeneID" id="26529739"/>
<dbReference type="KEGG" id="dwi:26529739"/>
<dbReference type="eggNOG" id="KOG2614">
    <property type="taxonomic scope" value="Eukaryota"/>
</dbReference>
<dbReference type="eggNOG" id="KOG4356">
    <property type="taxonomic scope" value="Eukaryota"/>
</dbReference>
<dbReference type="OrthoDB" id="546764at2759"/>
<dbReference type="PhylomeDB" id="P0CU29"/>
<dbReference type="Proteomes" id="UP000007798">
    <property type="component" value="Unassembled WGS sequence"/>
</dbReference>
<dbReference type="GO" id="GO:0005737">
    <property type="term" value="C:cytoplasm"/>
    <property type="evidence" value="ECO:0007669"/>
    <property type="project" value="UniProtKB-SubCell"/>
</dbReference>
<dbReference type="GO" id="GO:0008157">
    <property type="term" value="F:protein phosphatase 1 binding"/>
    <property type="evidence" value="ECO:0007669"/>
    <property type="project" value="EnsemblMetazoa"/>
</dbReference>
<dbReference type="GO" id="GO:0070286">
    <property type="term" value="P:axonemal dynein complex assembly"/>
    <property type="evidence" value="ECO:0007669"/>
    <property type="project" value="UniProtKB-UniRule"/>
</dbReference>
<dbReference type="GO" id="GO:0060285">
    <property type="term" value="P:cilium-dependent cell motility"/>
    <property type="evidence" value="ECO:0007669"/>
    <property type="project" value="UniProtKB-UniRule"/>
</dbReference>
<dbReference type="HAMAP" id="MF_03069">
    <property type="entry name" value="Kintoun"/>
    <property type="match status" value="1"/>
</dbReference>
<dbReference type="InterPro" id="IPR034727">
    <property type="entry name" value="Kintoun"/>
</dbReference>
<dbReference type="InterPro" id="IPR050734">
    <property type="entry name" value="PIH1/Kintoun_subfamily"/>
</dbReference>
<dbReference type="InterPro" id="IPR012981">
    <property type="entry name" value="PIH1_N"/>
</dbReference>
<dbReference type="InterPro" id="IPR041442">
    <property type="entry name" value="PIH1D1/2/3_CS-like"/>
</dbReference>
<dbReference type="PANTHER" id="PTHR22997">
    <property type="entry name" value="PIH1 DOMAIN-CONTAINING PROTEIN 1"/>
    <property type="match status" value="1"/>
</dbReference>
<dbReference type="PANTHER" id="PTHR22997:SF3">
    <property type="entry name" value="PROTEIN KINTOUN"/>
    <property type="match status" value="1"/>
</dbReference>
<dbReference type="Pfam" id="PF08190">
    <property type="entry name" value="PIH1"/>
    <property type="match status" value="1"/>
</dbReference>
<dbReference type="Pfam" id="PF18201">
    <property type="entry name" value="PIH1_CS"/>
    <property type="match status" value="1"/>
</dbReference>
<evidence type="ECO:0000250" key="1">
    <source>
        <dbReference type="UniProtKB" id="Q0E9G3"/>
    </source>
</evidence>
<evidence type="ECO:0000255" key="2">
    <source>
        <dbReference type="HAMAP-Rule" id="MF_03069"/>
    </source>
</evidence>
<evidence type="ECO:0000256" key="3">
    <source>
        <dbReference type="SAM" id="MobiDB-lite"/>
    </source>
</evidence>
<evidence type="ECO:0000305" key="4"/>
<name>KTU_DROWI</name>
<keyword id="KW-0963">Cytoplasm</keyword>
<keyword id="KW-0597">Phosphoprotein</keyword>
<keyword id="KW-1185">Reference proteome</keyword>